<comment type="function">
    <text evidence="1">Catalyzes the reversible conversion of 3-phosphohydroxypyruvate to phosphoserine and of 3-hydroxy-2-oxo-4-phosphonooxybutanoate to phosphohydroxythreonine.</text>
</comment>
<comment type="catalytic activity">
    <reaction evidence="1">
        <text>O-phospho-L-serine + 2-oxoglutarate = 3-phosphooxypyruvate + L-glutamate</text>
        <dbReference type="Rhea" id="RHEA:14329"/>
        <dbReference type="ChEBI" id="CHEBI:16810"/>
        <dbReference type="ChEBI" id="CHEBI:18110"/>
        <dbReference type="ChEBI" id="CHEBI:29985"/>
        <dbReference type="ChEBI" id="CHEBI:57524"/>
        <dbReference type="EC" id="2.6.1.52"/>
    </reaction>
</comment>
<comment type="catalytic activity">
    <reaction evidence="1">
        <text>4-(phosphooxy)-L-threonine + 2-oxoglutarate = (R)-3-hydroxy-2-oxo-4-phosphooxybutanoate + L-glutamate</text>
        <dbReference type="Rhea" id="RHEA:16573"/>
        <dbReference type="ChEBI" id="CHEBI:16810"/>
        <dbReference type="ChEBI" id="CHEBI:29985"/>
        <dbReference type="ChEBI" id="CHEBI:58452"/>
        <dbReference type="ChEBI" id="CHEBI:58538"/>
        <dbReference type="EC" id="2.6.1.52"/>
    </reaction>
</comment>
<comment type="cofactor">
    <cofactor evidence="1">
        <name>pyridoxal 5'-phosphate</name>
        <dbReference type="ChEBI" id="CHEBI:597326"/>
    </cofactor>
    <text evidence="1">Binds 1 pyridoxal phosphate per subunit.</text>
</comment>
<comment type="pathway">
    <text evidence="1">Amino-acid biosynthesis; L-serine biosynthesis; L-serine from 3-phospho-D-glycerate: step 2/3.</text>
</comment>
<comment type="pathway">
    <text evidence="1">Cofactor biosynthesis; pyridoxine 5'-phosphate biosynthesis; pyridoxine 5'-phosphate from D-erythrose 4-phosphate: step 3/5.</text>
</comment>
<comment type="subunit">
    <text evidence="1">Homodimer.</text>
</comment>
<comment type="subcellular location">
    <subcellularLocation>
        <location evidence="1">Cytoplasm</location>
    </subcellularLocation>
</comment>
<comment type="similarity">
    <text evidence="1">Belongs to the class-V pyridoxal-phosphate-dependent aminotransferase family. SerC subfamily.</text>
</comment>
<keyword id="KW-0028">Amino-acid biosynthesis</keyword>
<keyword id="KW-0032">Aminotransferase</keyword>
<keyword id="KW-0963">Cytoplasm</keyword>
<keyword id="KW-0663">Pyridoxal phosphate</keyword>
<keyword id="KW-0664">Pyridoxine biosynthesis</keyword>
<keyword id="KW-0718">Serine biosynthesis</keyword>
<keyword id="KW-0808">Transferase</keyword>
<dbReference type="EC" id="2.6.1.52" evidence="1"/>
<dbReference type="EMBL" id="AM747720">
    <property type="protein sequence ID" value="CAR53258.1"/>
    <property type="molecule type" value="Genomic_DNA"/>
</dbReference>
<dbReference type="RefSeq" id="WP_006486951.1">
    <property type="nucleotide sequence ID" value="NC_011000.1"/>
</dbReference>
<dbReference type="SMR" id="B4EB45"/>
<dbReference type="GeneID" id="56557486"/>
<dbReference type="KEGG" id="bcj:BCAL2955"/>
<dbReference type="eggNOG" id="COG1932">
    <property type="taxonomic scope" value="Bacteria"/>
</dbReference>
<dbReference type="HOGENOM" id="CLU_034866_0_2_4"/>
<dbReference type="BioCyc" id="BCEN216591:G1G1V-3264-MONOMER"/>
<dbReference type="UniPathway" id="UPA00135">
    <property type="reaction ID" value="UER00197"/>
</dbReference>
<dbReference type="UniPathway" id="UPA00244">
    <property type="reaction ID" value="UER00311"/>
</dbReference>
<dbReference type="Proteomes" id="UP000001035">
    <property type="component" value="Chromosome 1"/>
</dbReference>
<dbReference type="GO" id="GO:0005737">
    <property type="term" value="C:cytoplasm"/>
    <property type="evidence" value="ECO:0007669"/>
    <property type="project" value="UniProtKB-SubCell"/>
</dbReference>
<dbReference type="GO" id="GO:0004648">
    <property type="term" value="F:O-phospho-L-serine:2-oxoglutarate aminotransferase activity"/>
    <property type="evidence" value="ECO:0007669"/>
    <property type="project" value="UniProtKB-UniRule"/>
</dbReference>
<dbReference type="GO" id="GO:0030170">
    <property type="term" value="F:pyridoxal phosphate binding"/>
    <property type="evidence" value="ECO:0007669"/>
    <property type="project" value="UniProtKB-UniRule"/>
</dbReference>
<dbReference type="GO" id="GO:0006564">
    <property type="term" value="P:L-serine biosynthetic process"/>
    <property type="evidence" value="ECO:0007669"/>
    <property type="project" value="UniProtKB-UniRule"/>
</dbReference>
<dbReference type="GO" id="GO:0008615">
    <property type="term" value="P:pyridoxine biosynthetic process"/>
    <property type="evidence" value="ECO:0007669"/>
    <property type="project" value="UniProtKB-UniRule"/>
</dbReference>
<dbReference type="CDD" id="cd00611">
    <property type="entry name" value="PSAT_like"/>
    <property type="match status" value="1"/>
</dbReference>
<dbReference type="FunFam" id="3.40.640.10:FF:000010">
    <property type="entry name" value="Phosphoserine aminotransferase"/>
    <property type="match status" value="1"/>
</dbReference>
<dbReference type="FunFam" id="3.90.1150.10:FF:000006">
    <property type="entry name" value="Phosphoserine aminotransferase"/>
    <property type="match status" value="1"/>
</dbReference>
<dbReference type="Gene3D" id="3.90.1150.10">
    <property type="entry name" value="Aspartate Aminotransferase, domain 1"/>
    <property type="match status" value="1"/>
</dbReference>
<dbReference type="Gene3D" id="3.40.640.10">
    <property type="entry name" value="Type I PLP-dependent aspartate aminotransferase-like (Major domain)"/>
    <property type="match status" value="1"/>
</dbReference>
<dbReference type="HAMAP" id="MF_00160">
    <property type="entry name" value="SerC_aminotrans_5"/>
    <property type="match status" value="1"/>
</dbReference>
<dbReference type="InterPro" id="IPR000192">
    <property type="entry name" value="Aminotrans_V_dom"/>
</dbReference>
<dbReference type="InterPro" id="IPR020578">
    <property type="entry name" value="Aminotrans_V_PyrdxlP_BS"/>
</dbReference>
<dbReference type="InterPro" id="IPR022278">
    <property type="entry name" value="Pser_aminoTfrase"/>
</dbReference>
<dbReference type="InterPro" id="IPR015424">
    <property type="entry name" value="PyrdxlP-dep_Trfase"/>
</dbReference>
<dbReference type="InterPro" id="IPR015421">
    <property type="entry name" value="PyrdxlP-dep_Trfase_major"/>
</dbReference>
<dbReference type="InterPro" id="IPR015422">
    <property type="entry name" value="PyrdxlP-dep_Trfase_small"/>
</dbReference>
<dbReference type="NCBIfam" id="NF003764">
    <property type="entry name" value="PRK05355.1"/>
    <property type="match status" value="1"/>
</dbReference>
<dbReference type="NCBIfam" id="TIGR01364">
    <property type="entry name" value="serC_1"/>
    <property type="match status" value="1"/>
</dbReference>
<dbReference type="PANTHER" id="PTHR43247">
    <property type="entry name" value="PHOSPHOSERINE AMINOTRANSFERASE"/>
    <property type="match status" value="1"/>
</dbReference>
<dbReference type="PANTHER" id="PTHR43247:SF1">
    <property type="entry name" value="PHOSPHOSERINE AMINOTRANSFERASE"/>
    <property type="match status" value="1"/>
</dbReference>
<dbReference type="Pfam" id="PF00266">
    <property type="entry name" value="Aminotran_5"/>
    <property type="match status" value="1"/>
</dbReference>
<dbReference type="PIRSF" id="PIRSF000525">
    <property type="entry name" value="SerC"/>
    <property type="match status" value="1"/>
</dbReference>
<dbReference type="SUPFAM" id="SSF53383">
    <property type="entry name" value="PLP-dependent transferases"/>
    <property type="match status" value="1"/>
</dbReference>
<dbReference type="PROSITE" id="PS00595">
    <property type="entry name" value="AA_TRANSFER_CLASS_5"/>
    <property type="match status" value="1"/>
</dbReference>
<evidence type="ECO:0000255" key="1">
    <source>
        <dbReference type="HAMAP-Rule" id="MF_00160"/>
    </source>
</evidence>
<accession>B4EB45</accession>
<proteinExistence type="inferred from homology"/>
<feature type="chain" id="PRO_1000097206" description="Phosphoserine aminotransferase">
    <location>
        <begin position="1"/>
        <end position="360"/>
    </location>
</feature>
<feature type="binding site" evidence="1">
    <location>
        <position position="41"/>
    </location>
    <ligand>
        <name>L-glutamate</name>
        <dbReference type="ChEBI" id="CHEBI:29985"/>
    </ligand>
</feature>
<feature type="binding site" evidence="1">
    <location>
        <position position="101"/>
    </location>
    <ligand>
        <name>pyridoxal 5'-phosphate</name>
        <dbReference type="ChEBI" id="CHEBI:597326"/>
    </ligand>
</feature>
<feature type="binding site" evidence="1">
    <location>
        <position position="152"/>
    </location>
    <ligand>
        <name>pyridoxal 5'-phosphate</name>
        <dbReference type="ChEBI" id="CHEBI:597326"/>
    </ligand>
</feature>
<feature type="binding site" evidence="1">
    <location>
        <position position="172"/>
    </location>
    <ligand>
        <name>pyridoxal 5'-phosphate</name>
        <dbReference type="ChEBI" id="CHEBI:597326"/>
    </ligand>
</feature>
<feature type="binding site" evidence="1">
    <location>
        <position position="195"/>
    </location>
    <ligand>
        <name>pyridoxal 5'-phosphate</name>
        <dbReference type="ChEBI" id="CHEBI:597326"/>
    </ligand>
</feature>
<feature type="binding site" evidence="1">
    <location>
        <begin position="237"/>
        <end position="238"/>
    </location>
    <ligand>
        <name>pyridoxal 5'-phosphate</name>
        <dbReference type="ChEBI" id="CHEBI:597326"/>
    </ligand>
</feature>
<feature type="modified residue" description="N6-(pyridoxal phosphate)lysine" evidence="1">
    <location>
        <position position="196"/>
    </location>
</feature>
<sequence length="360" mass="39436">MRVFNFSAGPAAMPEEVLRQAADEMLDWHGSGMSVMEMSHRGKEFMSIHEAALTDLRDLLGVPASHRILFLQGGGIAENAIVPMNLLGARNTADFVVTGSWSQKSFGEAKKFCTPHLAASGKTENGFTRAPTRAEWQLSDDPAYVHLCTNETIDGVETFEIPDLGDVPLVADVSSHILSRPMDVAKYGVLFGGAQKNIGMAGVTVVIVREDLLDRALSICPSAFEWKTIAANNSLYNTPPTYAIYIAGLVFQWLKRQGGLEAIEARNIEKSKLLYDTIDASSFYLNKVEPAARSRMNVPFFLADETRNEDFLAGAKARGLLQLKGHKSVGGMRASIYNAVPLEGVKALVEYMKDFEQRDA</sequence>
<name>SERC_BURCJ</name>
<organism>
    <name type="scientific">Burkholderia cenocepacia (strain ATCC BAA-245 / DSM 16553 / LMG 16656 / NCTC 13227 / J2315 / CF5610)</name>
    <name type="common">Burkholderia cepacia (strain J2315)</name>
    <dbReference type="NCBI Taxonomy" id="216591"/>
    <lineage>
        <taxon>Bacteria</taxon>
        <taxon>Pseudomonadati</taxon>
        <taxon>Pseudomonadota</taxon>
        <taxon>Betaproteobacteria</taxon>
        <taxon>Burkholderiales</taxon>
        <taxon>Burkholderiaceae</taxon>
        <taxon>Burkholderia</taxon>
        <taxon>Burkholderia cepacia complex</taxon>
    </lineage>
</organism>
<reference key="1">
    <citation type="journal article" date="2009" name="J. Bacteriol.">
        <title>The genome of Burkholderia cenocepacia J2315, an epidemic pathogen of cystic fibrosis patients.</title>
        <authorList>
            <person name="Holden M.T."/>
            <person name="Seth-Smith H.M."/>
            <person name="Crossman L.C."/>
            <person name="Sebaihia M."/>
            <person name="Bentley S.D."/>
            <person name="Cerdeno-Tarraga A.M."/>
            <person name="Thomson N.R."/>
            <person name="Bason N."/>
            <person name="Quail M.A."/>
            <person name="Sharp S."/>
            <person name="Cherevach I."/>
            <person name="Churcher C."/>
            <person name="Goodhead I."/>
            <person name="Hauser H."/>
            <person name="Holroyd N."/>
            <person name="Mungall K."/>
            <person name="Scott P."/>
            <person name="Walker D."/>
            <person name="White B."/>
            <person name="Rose H."/>
            <person name="Iversen P."/>
            <person name="Mil-Homens D."/>
            <person name="Rocha E.P."/>
            <person name="Fialho A.M."/>
            <person name="Baldwin A."/>
            <person name="Dowson C."/>
            <person name="Barrell B.G."/>
            <person name="Govan J.R."/>
            <person name="Vandamme P."/>
            <person name="Hart C.A."/>
            <person name="Mahenthiralingam E."/>
            <person name="Parkhill J."/>
        </authorList>
    </citation>
    <scope>NUCLEOTIDE SEQUENCE [LARGE SCALE GENOMIC DNA]</scope>
    <source>
        <strain>ATCC BAA-245 / DSM 16553 / LMG 16656 / NCTC 13227 / J2315 / CF5610</strain>
    </source>
</reference>
<gene>
    <name evidence="1" type="primary">serC</name>
    <name type="ordered locus">BceJ2315_28910</name>
    <name type="ORF">BCAL2955</name>
</gene>
<protein>
    <recommendedName>
        <fullName evidence="1">Phosphoserine aminotransferase</fullName>
        <ecNumber evidence="1">2.6.1.52</ecNumber>
    </recommendedName>
    <alternativeName>
        <fullName evidence="1">Phosphohydroxythreonine aminotransferase</fullName>
        <shortName evidence="1">PSAT</shortName>
    </alternativeName>
</protein>